<evidence type="ECO:0000256" key="1">
    <source>
        <dbReference type="SAM" id="MobiDB-lite"/>
    </source>
</evidence>
<evidence type="ECO:0000269" key="2">
    <source>
    </source>
</evidence>
<evidence type="ECO:0000269" key="3">
    <source>
    </source>
</evidence>
<accession>P36134</accession>
<accession>D6VXA3</accession>
<sequence>MSDDDYMNSDDDNDAEKRYVRPIFVRKRRREEDYVATSKDNIHHHPCDWSAKPSQRQNENEQKSTIRLVPVAMNTPKCQEKKKKRKGVGTTSHEATLFEYGESIAGYKCVTTESERDRLKRSHESESSSESEVDVFAFDQAKGISSKVEAEERYARAVRQYWRMTKDEPATLPLPGTPTLAAVSLDMIDDKSVEQFYTMSSALMDANRLDLIRRDRIRWHPDKHRYHKSKVTKLFQAINGLWEQEKTEKR</sequence>
<comment type="miscellaneous">
    <text evidence="3">Present with 217 molecules/cell in log phase SD medium.</text>
</comment>
<keyword id="KW-1017">Isopeptide bond</keyword>
<keyword id="KW-1185">Reference proteome</keyword>
<keyword id="KW-0832">Ubl conjugation</keyword>
<proteinExistence type="evidence at protein level"/>
<name>YK21_YEAST</name>
<gene>
    <name type="ordered locus">YKR041W</name>
</gene>
<protein>
    <recommendedName>
        <fullName>Uncharacterized protein YKR041W</fullName>
    </recommendedName>
</protein>
<feature type="chain" id="PRO_0000203210" description="Uncharacterized protein YKR041W">
    <location>
        <begin position="1"/>
        <end position="250"/>
    </location>
</feature>
<feature type="region of interest" description="Disordered" evidence="1">
    <location>
        <begin position="30"/>
        <end position="67"/>
    </location>
</feature>
<feature type="cross-link" description="Glycyl lysine isopeptide (Lys-Gly) (interchain with G-Cter in ubiquitin)" evidence="2">
    <location>
        <position position="17"/>
    </location>
</feature>
<dbReference type="EMBL" id="Z28266">
    <property type="protein sequence ID" value="CAA82116.1"/>
    <property type="molecule type" value="Genomic_DNA"/>
</dbReference>
<dbReference type="EMBL" id="Z28265">
    <property type="protein sequence ID" value="CAA82115.1"/>
    <property type="molecule type" value="Genomic_DNA"/>
</dbReference>
<dbReference type="EMBL" id="BK006944">
    <property type="protein sequence ID" value="DAA09193.1"/>
    <property type="molecule type" value="Genomic_DNA"/>
</dbReference>
<dbReference type="PIR" id="S38113">
    <property type="entry name" value="S38113"/>
</dbReference>
<dbReference type="RefSeq" id="NP_012967.1">
    <property type="nucleotide sequence ID" value="NM_001179831.1"/>
</dbReference>
<dbReference type="BioGRID" id="34173">
    <property type="interactions" value="113"/>
</dbReference>
<dbReference type="FunCoup" id="P36134">
    <property type="interactions" value="85"/>
</dbReference>
<dbReference type="IntAct" id="P36134">
    <property type="interactions" value="14"/>
</dbReference>
<dbReference type="STRING" id="4932.YKR041W"/>
<dbReference type="iPTMnet" id="P36134"/>
<dbReference type="PaxDb" id="4932-YKR041W"/>
<dbReference type="PeptideAtlas" id="P36134"/>
<dbReference type="EnsemblFungi" id="YKR041W_mRNA">
    <property type="protein sequence ID" value="YKR041W"/>
    <property type="gene ID" value="YKR041W"/>
</dbReference>
<dbReference type="GeneID" id="853914"/>
<dbReference type="KEGG" id="sce:YKR041W"/>
<dbReference type="AGR" id="SGD:S000001749"/>
<dbReference type="SGD" id="S000001749">
    <property type="gene designation" value="YKR041W"/>
</dbReference>
<dbReference type="VEuPathDB" id="FungiDB:YKR041W"/>
<dbReference type="eggNOG" id="ENOG502S83T">
    <property type="taxonomic scope" value="Eukaryota"/>
</dbReference>
<dbReference type="HOGENOM" id="CLU_077477_0_0_1"/>
<dbReference type="InParanoid" id="P36134"/>
<dbReference type="OMA" id="EATLFEY"/>
<dbReference type="OrthoDB" id="412109at2759"/>
<dbReference type="BioCyc" id="YEAST:G3O-32012-MONOMER"/>
<dbReference type="BioGRID-ORCS" id="853914">
    <property type="hits" value="8 hits in 10 CRISPR screens"/>
</dbReference>
<dbReference type="PRO" id="PR:P36134"/>
<dbReference type="Proteomes" id="UP000002311">
    <property type="component" value="Chromosome XI"/>
</dbReference>
<dbReference type="RNAct" id="P36134">
    <property type="molecule type" value="protein"/>
</dbReference>
<dbReference type="GO" id="GO:0005737">
    <property type="term" value="C:cytoplasm"/>
    <property type="evidence" value="ECO:0007005"/>
    <property type="project" value="SGD"/>
</dbReference>
<dbReference type="GO" id="GO:0072686">
    <property type="term" value="C:mitotic spindle"/>
    <property type="evidence" value="ECO:0000314"/>
    <property type="project" value="SGD"/>
</dbReference>
<dbReference type="GO" id="GO:0005634">
    <property type="term" value="C:nucleus"/>
    <property type="evidence" value="ECO:0000314"/>
    <property type="project" value="SGD"/>
</dbReference>
<reference key="1">
    <citation type="journal article" date="1994" name="Nature">
        <title>Complete DNA sequence of yeast chromosome XI.</title>
        <authorList>
            <person name="Dujon B."/>
            <person name="Alexandraki D."/>
            <person name="Andre B."/>
            <person name="Ansorge W."/>
            <person name="Baladron V."/>
            <person name="Ballesta J.P.G."/>
            <person name="Banrevi A."/>
            <person name="Bolle P.-A."/>
            <person name="Bolotin-Fukuhara M."/>
            <person name="Bossier P."/>
            <person name="Bou G."/>
            <person name="Boyer J."/>
            <person name="Buitrago M.J."/>
            <person name="Cheret G."/>
            <person name="Colleaux L."/>
            <person name="Daignan-Fornier B."/>
            <person name="del Rey F."/>
            <person name="Dion C."/>
            <person name="Domdey H."/>
            <person name="Duesterhoeft A."/>
            <person name="Duesterhus S."/>
            <person name="Entian K.-D."/>
            <person name="Erfle H."/>
            <person name="Esteban P.F."/>
            <person name="Feldmann H."/>
            <person name="Fernandes L."/>
            <person name="Fobo G.M."/>
            <person name="Fritz C."/>
            <person name="Fukuhara H."/>
            <person name="Gabel C."/>
            <person name="Gaillon L."/>
            <person name="Garcia-Cantalejo J.M."/>
            <person name="Garcia-Ramirez J.J."/>
            <person name="Gent M.E."/>
            <person name="Ghazvini M."/>
            <person name="Goffeau A."/>
            <person name="Gonzalez A."/>
            <person name="Grothues D."/>
            <person name="Guerreiro P."/>
            <person name="Hegemann J.H."/>
            <person name="Hewitt N."/>
            <person name="Hilger F."/>
            <person name="Hollenberg C.P."/>
            <person name="Horaitis O."/>
            <person name="Indge K.J."/>
            <person name="Jacquier A."/>
            <person name="James C.M."/>
            <person name="Jauniaux J.-C."/>
            <person name="Jimenez A."/>
            <person name="Keuchel H."/>
            <person name="Kirchrath L."/>
            <person name="Kleine K."/>
            <person name="Koetter P."/>
            <person name="Legrain P."/>
            <person name="Liebl S."/>
            <person name="Louis E.J."/>
            <person name="Maia e Silva A."/>
            <person name="Marck C."/>
            <person name="Monnier A.-L."/>
            <person name="Moestl D."/>
            <person name="Mueller S."/>
            <person name="Obermaier B."/>
            <person name="Oliver S.G."/>
            <person name="Pallier C."/>
            <person name="Pascolo S."/>
            <person name="Pfeiffer F."/>
            <person name="Philippsen P."/>
            <person name="Planta R.J."/>
            <person name="Pohl F.M."/>
            <person name="Pohl T.M."/>
            <person name="Poehlmann R."/>
            <person name="Portetelle D."/>
            <person name="Purnelle B."/>
            <person name="Puzos V."/>
            <person name="Ramezani Rad M."/>
            <person name="Rasmussen S.W."/>
            <person name="Remacha M.A."/>
            <person name="Revuelta J.L."/>
            <person name="Richard G.-F."/>
            <person name="Rieger M."/>
            <person name="Rodrigues-Pousada C."/>
            <person name="Rose M."/>
            <person name="Rupp T."/>
            <person name="Santos M.A."/>
            <person name="Schwager C."/>
            <person name="Sensen C."/>
            <person name="Skala J."/>
            <person name="Soares H."/>
            <person name="Sor F."/>
            <person name="Stegemann J."/>
            <person name="Tettelin H."/>
            <person name="Thierry A."/>
            <person name="Tzermia M."/>
            <person name="Urrestarazu L.A."/>
            <person name="van Dyck L."/>
            <person name="van Vliet-Reedijk J.C."/>
            <person name="Valens M."/>
            <person name="Vandenbol M."/>
            <person name="Vilela C."/>
            <person name="Vissers S."/>
            <person name="von Wettstein D."/>
            <person name="Voss H."/>
            <person name="Wiemann S."/>
            <person name="Xu G."/>
            <person name="Zimmermann J."/>
            <person name="Haasemann M."/>
            <person name="Becker I."/>
            <person name="Mewes H.-W."/>
        </authorList>
    </citation>
    <scope>NUCLEOTIDE SEQUENCE [LARGE SCALE GENOMIC DNA]</scope>
    <source>
        <strain>ATCC 204508 / S288c</strain>
    </source>
</reference>
<reference key="2">
    <citation type="journal article" date="2014" name="G3 (Bethesda)">
        <title>The reference genome sequence of Saccharomyces cerevisiae: Then and now.</title>
        <authorList>
            <person name="Engel S.R."/>
            <person name="Dietrich F.S."/>
            <person name="Fisk D.G."/>
            <person name="Binkley G."/>
            <person name="Balakrishnan R."/>
            <person name="Costanzo M.C."/>
            <person name="Dwight S.S."/>
            <person name="Hitz B.C."/>
            <person name="Karra K."/>
            <person name="Nash R.S."/>
            <person name="Weng S."/>
            <person name="Wong E.D."/>
            <person name="Lloyd P."/>
            <person name="Skrzypek M.S."/>
            <person name="Miyasato S.R."/>
            <person name="Simison M."/>
            <person name="Cherry J.M."/>
        </authorList>
    </citation>
    <scope>GENOME REANNOTATION</scope>
    <source>
        <strain>ATCC 204508 / S288c</strain>
    </source>
</reference>
<reference key="3">
    <citation type="journal article" date="2003" name="Nature">
        <title>Global analysis of protein expression in yeast.</title>
        <authorList>
            <person name="Ghaemmaghami S."/>
            <person name="Huh W.-K."/>
            <person name="Bower K."/>
            <person name="Howson R.W."/>
            <person name="Belle A."/>
            <person name="Dephoure N."/>
            <person name="O'Shea E.K."/>
            <person name="Weissman J.S."/>
        </authorList>
    </citation>
    <scope>LEVEL OF PROTEIN EXPRESSION [LARGE SCALE ANALYSIS]</scope>
</reference>
<reference key="4">
    <citation type="journal article" date="2003" name="Nat. Biotechnol.">
        <title>A proteomics approach to understanding protein ubiquitination.</title>
        <authorList>
            <person name="Peng J."/>
            <person name="Schwartz D."/>
            <person name="Elias J.E."/>
            <person name="Thoreen C.C."/>
            <person name="Cheng D."/>
            <person name="Marsischky G."/>
            <person name="Roelofs J."/>
            <person name="Finley D."/>
            <person name="Gygi S.P."/>
        </authorList>
    </citation>
    <scope>UBIQUITINATION [LARGE SCALE ANALYSIS] AT LYS-17</scope>
    <scope>IDENTIFICATION BY MASS SPECTROMETRY</scope>
    <source>
        <strain>SUB592</strain>
    </source>
</reference>
<organism>
    <name type="scientific">Saccharomyces cerevisiae (strain ATCC 204508 / S288c)</name>
    <name type="common">Baker's yeast</name>
    <dbReference type="NCBI Taxonomy" id="559292"/>
    <lineage>
        <taxon>Eukaryota</taxon>
        <taxon>Fungi</taxon>
        <taxon>Dikarya</taxon>
        <taxon>Ascomycota</taxon>
        <taxon>Saccharomycotina</taxon>
        <taxon>Saccharomycetes</taxon>
        <taxon>Saccharomycetales</taxon>
        <taxon>Saccharomycetaceae</taxon>
        <taxon>Saccharomyces</taxon>
    </lineage>
</organism>